<dbReference type="EC" id="2.8.1.10" evidence="1"/>
<dbReference type="EMBL" id="CP000552">
    <property type="protein sequence ID" value="ABM73061.1"/>
    <property type="molecule type" value="Genomic_DNA"/>
</dbReference>
<dbReference type="RefSeq" id="WP_011821145.1">
    <property type="nucleotide sequence ID" value="NC_008817.1"/>
</dbReference>
<dbReference type="SMR" id="A2BZ50"/>
<dbReference type="STRING" id="167542.P9515_18541"/>
<dbReference type="GeneID" id="60201304"/>
<dbReference type="KEGG" id="pmc:P9515_18541"/>
<dbReference type="eggNOG" id="COG2022">
    <property type="taxonomic scope" value="Bacteria"/>
</dbReference>
<dbReference type="HOGENOM" id="CLU_062233_1_0_3"/>
<dbReference type="OrthoDB" id="9805935at2"/>
<dbReference type="UniPathway" id="UPA00060"/>
<dbReference type="Proteomes" id="UP000001589">
    <property type="component" value="Chromosome"/>
</dbReference>
<dbReference type="GO" id="GO:0005737">
    <property type="term" value="C:cytoplasm"/>
    <property type="evidence" value="ECO:0007669"/>
    <property type="project" value="UniProtKB-SubCell"/>
</dbReference>
<dbReference type="GO" id="GO:1990107">
    <property type="term" value="F:thiazole synthase activity"/>
    <property type="evidence" value="ECO:0007669"/>
    <property type="project" value="UniProtKB-EC"/>
</dbReference>
<dbReference type="GO" id="GO:0009229">
    <property type="term" value="P:thiamine diphosphate biosynthetic process"/>
    <property type="evidence" value="ECO:0007669"/>
    <property type="project" value="UniProtKB-UniRule"/>
</dbReference>
<dbReference type="CDD" id="cd04728">
    <property type="entry name" value="ThiG"/>
    <property type="match status" value="1"/>
</dbReference>
<dbReference type="Gene3D" id="3.20.20.70">
    <property type="entry name" value="Aldolase class I"/>
    <property type="match status" value="1"/>
</dbReference>
<dbReference type="HAMAP" id="MF_00443">
    <property type="entry name" value="ThiG"/>
    <property type="match status" value="1"/>
</dbReference>
<dbReference type="InterPro" id="IPR013785">
    <property type="entry name" value="Aldolase_TIM"/>
</dbReference>
<dbReference type="InterPro" id="IPR033983">
    <property type="entry name" value="Thiazole_synthase_ThiG"/>
</dbReference>
<dbReference type="InterPro" id="IPR008867">
    <property type="entry name" value="ThiG"/>
</dbReference>
<dbReference type="PANTHER" id="PTHR34266">
    <property type="entry name" value="THIAZOLE SYNTHASE"/>
    <property type="match status" value="1"/>
</dbReference>
<dbReference type="PANTHER" id="PTHR34266:SF2">
    <property type="entry name" value="THIAZOLE SYNTHASE"/>
    <property type="match status" value="1"/>
</dbReference>
<dbReference type="Pfam" id="PF05690">
    <property type="entry name" value="ThiG"/>
    <property type="match status" value="1"/>
</dbReference>
<dbReference type="SUPFAM" id="SSF110399">
    <property type="entry name" value="ThiG-like"/>
    <property type="match status" value="1"/>
</dbReference>
<proteinExistence type="inferred from homology"/>
<evidence type="ECO:0000255" key="1">
    <source>
        <dbReference type="HAMAP-Rule" id="MF_00443"/>
    </source>
</evidence>
<keyword id="KW-0963">Cytoplasm</keyword>
<keyword id="KW-0704">Schiff base</keyword>
<keyword id="KW-0784">Thiamine biosynthesis</keyword>
<keyword id="KW-0808">Transferase</keyword>
<feature type="chain" id="PRO_1000026024" description="Thiazole synthase">
    <location>
        <begin position="1"/>
        <end position="265"/>
    </location>
</feature>
<feature type="active site" description="Schiff-base intermediate with DXP" evidence="1">
    <location>
        <position position="106"/>
    </location>
</feature>
<feature type="binding site" evidence="1">
    <location>
        <position position="167"/>
    </location>
    <ligand>
        <name>1-deoxy-D-xylulose 5-phosphate</name>
        <dbReference type="ChEBI" id="CHEBI:57792"/>
    </ligand>
</feature>
<feature type="binding site" evidence="1">
    <location>
        <begin position="193"/>
        <end position="194"/>
    </location>
    <ligand>
        <name>1-deoxy-D-xylulose 5-phosphate</name>
        <dbReference type="ChEBI" id="CHEBI:57792"/>
    </ligand>
</feature>
<feature type="binding site" evidence="1">
    <location>
        <begin position="215"/>
        <end position="216"/>
    </location>
    <ligand>
        <name>1-deoxy-D-xylulose 5-phosphate</name>
        <dbReference type="ChEBI" id="CHEBI:57792"/>
    </ligand>
</feature>
<gene>
    <name evidence="1" type="primary">thiG</name>
    <name type="ordered locus">P9515_18541</name>
</gene>
<comment type="function">
    <text evidence="1">Catalyzes the rearrangement of 1-deoxy-D-xylulose 5-phosphate (DXP) to produce the thiazole phosphate moiety of thiamine. Sulfur is provided by the thiocarboxylate moiety of the carrier protein ThiS. In vitro, sulfur can be provided by H(2)S.</text>
</comment>
<comment type="catalytic activity">
    <reaction evidence="1">
        <text>[ThiS sulfur-carrier protein]-C-terminal-Gly-aminoethanethioate + 2-iminoacetate + 1-deoxy-D-xylulose 5-phosphate = [ThiS sulfur-carrier protein]-C-terminal Gly-Gly + 2-[(2R,5Z)-2-carboxy-4-methylthiazol-5(2H)-ylidene]ethyl phosphate + 2 H2O + H(+)</text>
        <dbReference type="Rhea" id="RHEA:26297"/>
        <dbReference type="Rhea" id="RHEA-COMP:12909"/>
        <dbReference type="Rhea" id="RHEA-COMP:19908"/>
        <dbReference type="ChEBI" id="CHEBI:15377"/>
        <dbReference type="ChEBI" id="CHEBI:15378"/>
        <dbReference type="ChEBI" id="CHEBI:57792"/>
        <dbReference type="ChEBI" id="CHEBI:62899"/>
        <dbReference type="ChEBI" id="CHEBI:77846"/>
        <dbReference type="ChEBI" id="CHEBI:90778"/>
        <dbReference type="ChEBI" id="CHEBI:232372"/>
        <dbReference type="EC" id="2.8.1.10"/>
    </reaction>
</comment>
<comment type="pathway">
    <text evidence="1">Cofactor biosynthesis; thiamine diphosphate biosynthesis.</text>
</comment>
<comment type="subunit">
    <text evidence="1">Homotetramer. Forms heterodimers with either ThiH or ThiS.</text>
</comment>
<comment type="subcellular location">
    <subcellularLocation>
        <location evidence="1">Cytoplasm</location>
    </subcellularLocation>
</comment>
<comment type="similarity">
    <text evidence="1">Belongs to the ThiG family.</text>
</comment>
<name>THIG_PROM5</name>
<organism>
    <name type="scientific">Prochlorococcus marinus (strain MIT 9515)</name>
    <dbReference type="NCBI Taxonomy" id="167542"/>
    <lineage>
        <taxon>Bacteria</taxon>
        <taxon>Bacillati</taxon>
        <taxon>Cyanobacteriota</taxon>
        <taxon>Cyanophyceae</taxon>
        <taxon>Synechococcales</taxon>
        <taxon>Prochlorococcaceae</taxon>
        <taxon>Prochlorococcus</taxon>
    </lineage>
</organism>
<reference key="1">
    <citation type="journal article" date="2007" name="PLoS Genet.">
        <title>Patterns and implications of gene gain and loss in the evolution of Prochlorococcus.</title>
        <authorList>
            <person name="Kettler G.C."/>
            <person name="Martiny A.C."/>
            <person name="Huang K."/>
            <person name="Zucker J."/>
            <person name="Coleman M.L."/>
            <person name="Rodrigue S."/>
            <person name="Chen F."/>
            <person name="Lapidus A."/>
            <person name="Ferriera S."/>
            <person name="Johnson J."/>
            <person name="Steglich C."/>
            <person name="Church G.M."/>
            <person name="Richardson P."/>
            <person name="Chisholm S.W."/>
        </authorList>
    </citation>
    <scope>NUCLEOTIDE SEQUENCE [LARGE SCALE GENOMIC DNA]</scope>
    <source>
        <strain>MIT 9515</strain>
    </source>
</reference>
<sequence>MKEDSALIIGGKNFSSRLMVGTGKYTSAEVMVESLLNTESEIVTVAVRRVQNHQNGENLLEKIDWEKFWMLPNTAGCANADEAVRIAILGRELAKLSGQEENNFVKLEVIPDKKYLLPDPIETLKAAEILIKKDFIVLPYINADPILAKKLEEIGCSTVMPLGSPIGSGQGLLNLSNISIIIENSNIPVIIDAGIGVPSEASQAMELGADGVLINSAIALAKDPLKMAKAMNHGVRAGREAFLAGRIEKQRLASASSPFTNISKK</sequence>
<accession>A2BZ50</accession>
<protein>
    <recommendedName>
        <fullName evidence="1">Thiazole synthase</fullName>
        <ecNumber evidence="1">2.8.1.10</ecNumber>
    </recommendedName>
</protein>